<dbReference type="EC" id="1.8.1.2" evidence="1"/>
<dbReference type="EMBL" id="CP000800">
    <property type="protein sequence ID" value="ABV20250.1"/>
    <property type="molecule type" value="Genomic_DNA"/>
</dbReference>
<dbReference type="RefSeq" id="WP_000211906.1">
    <property type="nucleotide sequence ID" value="NC_009801.1"/>
</dbReference>
<dbReference type="BMRB" id="A7ZQK7"/>
<dbReference type="SMR" id="A7ZQK7"/>
<dbReference type="KEGG" id="ecw:EcE24377A_3066"/>
<dbReference type="HOGENOM" id="CLU_001570_17_7_6"/>
<dbReference type="UniPathway" id="UPA00140">
    <property type="reaction ID" value="UER00207"/>
</dbReference>
<dbReference type="Proteomes" id="UP000001122">
    <property type="component" value="Chromosome"/>
</dbReference>
<dbReference type="GO" id="GO:0005829">
    <property type="term" value="C:cytosol"/>
    <property type="evidence" value="ECO:0007669"/>
    <property type="project" value="TreeGrafter"/>
</dbReference>
<dbReference type="GO" id="GO:0050660">
    <property type="term" value="F:flavin adenine dinucleotide binding"/>
    <property type="evidence" value="ECO:0007669"/>
    <property type="project" value="InterPro"/>
</dbReference>
<dbReference type="GO" id="GO:0010181">
    <property type="term" value="F:FMN binding"/>
    <property type="evidence" value="ECO:0007669"/>
    <property type="project" value="InterPro"/>
</dbReference>
<dbReference type="GO" id="GO:0004783">
    <property type="term" value="F:sulfite reductase (NADPH) activity"/>
    <property type="evidence" value="ECO:0007669"/>
    <property type="project" value="UniProtKB-UniRule"/>
</dbReference>
<dbReference type="GO" id="GO:0019344">
    <property type="term" value="P:cysteine biosynthetic process"/>
    <property type="evidence" value="ECO:0007669"/>
    <property type="project" value="UniProtKB-KW"/>
</dbReference>
<dbReference type="GO" id="GO:0070814">
    <property type="term" value="P:hydrogen sulfide biosynthetic process"/>
    <property type="evidence" value="ECO:0007669"/>
    <property type="project" value="UniProtKB-UniRule"/>
</dbReference>
<dbReference type="GO" id="GO:0000103">
    <property type="term" value="P:sulfate assimilation"/>
    <property type="evidence" value="ECO:0007669"/>
    <property type="project" value="UniProtKB-UniRule"/>
</dbReference>
<dbReference type="CDD" id="cd06199">
    <property type="entry name" value="SiR"/>
    <property type="match status" value="1"/>
</dbReference>
<dbReference type="FunFam" id="3.40.50.80:FF:000001">
    <property type="entry name" value="NADPH--cytochrome P450 reductase 1"/>
    <property type="match status" value="1"/>
</dbReference>
<dbReference type="FunFam" id="1.20.990.10:FF:000004">
    <property type="entry name" value="Sulfite reductase [NADPH] flavoprotein alpha-component"/>
    <property type="match status" value="1"/>
</dbReference>
<dbReference type="FunFam" id="3.40.50.360:FF:000018">
    <property type="entry name" value="Sulfite reductase [NADPH] flavoprotein alpha-component"/>
    <property type="match status" value="1"/>
</dbReference>
<dbReference type="Gene3D" id="3.40.50.360">
    <property type="match status" value="1"/>
</dbReference>
<dbReference type="Gene3D" id="1.20.990.10">
    <property type="entry name" value="NADPH-cytochrome p450 Reductase, Chain A, domain 3"/>
    <property type="match status" value="1"/>
</dbReference>
<dbReference type="Gene3D" id="3.40.50.80">
    <property type="entry name" value="Nucleotide-binding domain of ferredoxin-NADP reductase (FNR) module"/>
    <property type="match status" value="1"/>
</dbReference>
<dbReference type="Gene3D" id="2.40.30.10">
    <property type="entry name" value="Translation factors"/>
    <property type="match status" value="1"/>
</dbReference>
<dbReference type="HAMAP" id="MF_01541">
    <property type="entry name" value="CysJ"/>
    <property type="match status" value="1"/>
</dbReference>
<dbReference type="InterPro" id="IPR010199">
    <property type="entry name" value="CysJ"/>
</dbReference>
<dbReference type="InterPro" id="IPR003097">
    <property type="entry name" value="CysJ-like_FAD-binding"/>
</dbReference>
<dbReference type="InterPro" id="IPR029758">
    <property type="entry name" value="CysJ_Proteobact"/>
</dbReference>
<dbReference type="InterPro" id="IPR017927">
    <property type="entry name" value="FAD-bd_FR_type"/>
</dbReference>
<dbReference type="InterPro" id="IPR001094">
    <property type="entry name" value="Flavdoxin-like"/>
</dbReference>
<dbReference type="InterPro" id="IPR008254">
    <property type="entry name" value="Flavodoxin/NO_synth"/>
</dbReference>
<dbReference type="InterPro" id="IPR001709">
    <property type="entry name" value="Flavoprot_Pyr_Nucl_cyt_Rdtase"/>
</dbReference>
<dbReference type="InterPro" id="IPR029039">
    <property type="entry name" value="Flavoprotein-like_sf"/>
</dbReference>
<dbReference type="InterPro" id="IPR039261">
    <property type="entry name" value="FNR_nucleotide-bd"/>
</dbReference>
<dbReference type="InterPro" id="IPR023173">
    <property type="entry name" value="NADPH_Cyt_P450_Rdtase_alpha"/>
</dbReference>
<dbReference type="InterPro" id="IPR001433">
    <property type="entry name" value="OxRdtase_FAD/NAD-bd"/>
</dbReference>
<dbReference type="InterPro" id="IPR017938">
    <property type="entry name" value="Riboflavin_synthase-like_b-brl"/>
</dbReference>
<dbReference type="NCBIfam" id="TIGR01931">
    <property type="entry name" value="cysJ"/>
    <property type="match status" value="1"/>
</dbReference>
<dbReference type="NCBIfam" id="NF004859">
    <property type="entry name" value="PRK06214.1"/>
    <property type="match status" value="1"/>
</dbReference>
<dbReference type="NCBIfam" id="NF008197">
    <property type="entry name" value="PRK10953.1"/>
    <property type="match status" value="1"/>
</dbReference>
<dbReference type="PANTHER" id="PTHR19384:SF128">
    <property type="entry name" value="NADPH OXIDOREDUCTASE A"/>
    <property type="match status" value="1"/>
</dbReference>
<dbReference type="PANTHER" id="PTHR19384">
    <property type="entry name" value="NITRIC OXIDE SYNTHASE-RELATED"/>
    <property type="match status" value="1"/>
</dbReference>
<dbReference type="Pfam" id="PF00667">
    <property type="entry name" value="FAD_binding_1"/>
    <property type="match status" value="1"/>
</dbReference>
<dbReference type="Pfam" id="PF00258">
    <property type="entry name" value="Flavodoxin_1"/>
    <property type="match status" value="1"/>
</dbReference>
<dbReference type="Pfam" id="PF00175">
    <property type="entry name" value="NAD_binding_1"/>
    <property type="match status" value="1"/>
</dbReference>
<dbReference type="PIRSF" id="PIRSF000207">
    <property type="entry name" value="SiR-FP_CysJ"/>
    <property type="match status" value="1"/>
</dbReference>
<dbReference type="PRINTS" id="PR00369">
    <property type="entry name" value="FLAVODOXIN"/>
</dbReference>
<dbReference type="PRINTS" id="PR00371">
    <property type="entry name" value="FPNCR"/>
</dbReference>
<dbReference type="SUPFAM" id="SSF52343">
    <property type="entry name" value="Ferredoxin reductase-like, C-terminal NADP-linked domain"/>
    <property type="match status" value="1"/>
</dbReference>
<dbReference type="SUPFAM" id="SSF52218">
    <property type="entry name" value="Flavoproteins"/>
    <property type="match status" value="1"/>
</dbReference>
<dbReference type="SUPFAM" id="SSF63380">
    <property type="entry name" value="Riboflavin synthase domain-like"/>
    <property type="match status" value="1"/>
</dbReference>
<dbReference type="PROSITE" id="PS51384">
    <property type="entry name" value="FAD_FR"/>
    <property type="match status" value="1"/>
</dbReference>
<dbReference type="PROSITE" id="PS50902">
    <property type="entry name" value="FLAVODOXIN_LIKE"/>
    <property type="match status" value="1"/>
</dbReference>
<comment type="function">
    <text evidence="1">Component of the sulfite reductase complex that catalyzes the 6-electron reduction of sulfite to sulfide. This is one of several activities required for the biosynthesis of L-cysteine from sulfate. The flavoprotein component catalyzes the electron flow from NADPH -&gt; FAD -&gt; FMN to the hemoprotein component.</text>
</comment>
<comment type="catalytic activity">
    <reaction evidence="1">
        <text>hydrogen sulfide + 3 NADP(+) + 3 H2O = sulfite + 3 NADPH + 4 H(+)</text>
        <dbReference type="Rhea" id="RHEA:13801"/>
        <dbReference type="ChEBI" id="CHEBI:15377"/>
        <dbReference type="ChEBI" id="CHEBI:15378"/>
        <dbReference type="ChEBI" id="CHEBI:17359"/>
        <dbReference type="ChEBI" id="CHEBI:29919"/>
        <dbReference type="ChEBI" id="CHEBI:57783"/>
        <dbReference type="ChEBI" id="CHEBI:58349"/>
        <dbReference type="EC" id="1.8.1.2"/>
    </reaction>
</comment>
<comment type="cofactor">
    <cofactor evidence="1">
        <name>FAD</name>
        <dbReference type="ChEBI" id="CHEBI:57692"/>
    </cofactor>
    <text evidence="1">Binds 1 FAD per subunit.</text>
</comment>
<comment type="cofactor">
    <cofactor evidence="1">
        <name>FMN</name>
        <dbReference type="ChEBI" id="CHEBI:58210"/>
    </cofactor>
    <text evidence="1">Binds 1 FMN per subunit.</text>
</comment>
<comment type="pathway">
    <text evidence="1">Sulfur metabolism; hydrogen sulfide biosynthesis; hydrogen sulfide from sulfite (NADPH route): step 1/1.</text>
</comment>
<comment type="subunit">
    <text evidence="1">Alpha(8)-beta(8). The alpha component is a flavoprotein, the beta component is a hemoprotein.</text>
</comment>
<comment type="similarity">
    <text evidence="1">Belongs to the NADPH-dependent sulphite reductase flavoprotein subunit CysJ family.</text>
</comment>
<comment type="similarity">
    <text evidence="1">In the N-terminal section; belongs to the flavodoxin family.</text>
</comment>
<comment type="similarity">
    <text evidence="1">In the C-terminal section; belongs to the flavoprotein pyridine nucleotide cytochrome reductase family.</text>
</comment>
<organism>
    <name type="scientific">Escherichia coli O139:H28 (strain E24377A / ETEC)</name>
    <dbReference type="NCBI Taxonomy" id="331111"/>
    <lineage>
        <taxon>Bacteria</taxon>
        <taxon>Pseudomonadati</taxon>
        <taxon>Pseudomonadota</taxon>
        <taxon>Gammaproteobacteria</taxon>
        <taxon>Enterobacterales</taxon>
        <taxon>Enterobacteriaceae</taxon>
        <taxon>Escherichia</taxon>
    </lineage>
</organism>
<keyword id="KW-0028">Amino-acid biosynthesis</keyword>
<keyword id="KW-0198">Cysteine biosynthesis</keyword>
<keyword id="KW-0249">Electron transport</keyword>
<keyword id="KW-0274">FAD</keyword>
<keyword id="KW-0285">Flavoprotein</keyword>
<keyword id="KW-0288">FMN</keyword>
<keyword id="KW-0521">NADP</keyword>
<keyword id="KW-0560">Oxidoreductase</keyword>
<keyword id="KW-1185">Reference proteome</keyword>
<keyword id="KW-0813">Transport</keyword>
<accession>A7ZQK7</accession>
<proteinExistence type="inferred from homology"/>
<evidence type="ECO:0000255" key="1">
    <source>
        <dbReference type="HAMAP-Rule" id="MF_01541"/>
    </source>
</evidence>
<feature type="chain" id="PRO_1000087632" description="Sulfite reductase [NADPH] flavoprotein alpha-component">
    <location>
        <begin position="1"/>
        <end position="599"/>
    </location>
</feature>
<feature type="domain" description="Flavodoxin-like" evidence="1">
    <location>
        <begin position="64"/>
        <end position="202"/>
    </location>
</feature>
<feature type="domain" description="FAD-binding FR-type" evidence="1">
    <location>
        <begin position="234"/>
        <end position="448"/>
    </location>
</feature>
<feature type="binding site" evidence="1">
    <location>
        <begin position="70"/>
        <end position="75"/>
    </location>
    <ligand>
        <name>FMN</name>
        <dbReference type="ChEBI" id="CHEBI:58210"/>
    </ligand>
</feature>
<feature type="binding site" evidence="1">
    <location>
        <begin position="117"/>
        <end position="120"/>
    </location>
    <ligand>
        <name>FMN</name>
        <dbReference type="ChEBI" id="CHEBI:58210"/>
    </ligand>
</feature>
<feature type="binding site" evidence="1">
    <location>
        <begin position="153"/>
        <end position="162"/>
    </location>
    <ligand>
        <name>FMN</name>
        <dbReference type="ChEBI" id="CHEBI:58210"/>
    </ligand>
</feature>
<feature type="binding site" evidence="1">
    <location>
        <position position="322"/>
    </location>
    <ligand>
        <name>FAD</name>
        <dbReference type="ChEBI" id="CHEBI:57692"/>
    </ligand>
</feature>
<feature type="binding site" evidence="1">
    <location>
        <position position="356"/>
    </location>
    <ligand>
        <name>FAD</name>
        <dbReference type="ChEBI" id="CHEBI:57692"/>
    </ligand>
</feature>
<feature type="binding site" evidence="1">
    <location>
        <begin position="386"/>
        <end position="389"/>
    </location>
    <ligand>
        <name>FAD</name>
        <dbReference type="ChEBI" id="CHEBI:57692"/>
    </ligand>
</feature>
<feature type="binding site" evidence="1">
    <location>
        <begin position="404"/>
        <end position="406"/>
    </location>
    <ligand>
        <name>FAD</name>
        <dbReference type="ChEBI" id="CHEBI:57692"/>
    </ligand>
</feature>
<feature type="binding site" evidence="1">
    <location>
        <position position="410"/>
    </location>
    <ligand>
        <name>FAD</name>
        <dbReference type="ChEBI" id="CHEBI:57692"/>
    </ligand>
</feature>
<feature type="binding site" evidence="1">
    <location>
        <begin position="419"/>
        <end position="422"/>
    </location>
    <ligand>
        <name>FAD</name>
        <dbReference type="ChEBI" id="CHEBI:57692"/>
    </ligand>
</feature>
<feature type="binding site" evidence="1">
    <location>
        <begin position="519"/>
        <end position="520"/>
    </location>
    <ligand>
        <name>NADP(+)</name>
        <dbReference type="ChEBI" id="CHEBI:58349"/>
    </ligand>
</feature>
<feature type="binding site" evidence="1">
    <location>
        <begin position="525"/>
        <end position="529"/>
    </location>
    <ligand>
        <name>NADP(+)</name>
        <dbReference type="ChEBI" id="CHEBI:58349"/>
    </ligand>
</feature>
<feature type="binding site" evidence="1">
    <location>
        <position position="561"/>
    </location>
    <ligand>
        <name>NADP(+)</name>
        <dbReference type="ChEBI" id="CHEBI:58349"/>
    </ligand>
</feature>
<feature type="binding site" evidence="1">
    <location>
        <position position="599"/>
    </location>
    <ligand>
        <name>FAD</name>
        <dbReference type="ChEBI" id="CHEBI:57692"/>
    </ligand>
</feature>
<sequence>MTTQVPPSALLPLNPEQLARLQAATTDLTPTQLAWVSGYFWGVLNQQPAALAATPAPAAEMPGITIISASQTGNARRVAEALRDDLLAAKLNVKLVNAGDYKFKQIASEKLLIVVTSTQGEGEPPEEAVALHKFLFSKKAPKLENTAFAVFSLGDSSYEFFCQSGKDFDSKLAELGGERLLDRVDADVEYQAAASEWRARVVDALKSRAPVAAPSQSVATGAVNEIHTSPYSKDAPLVASLSVNQKITGRNSEKDVRHIEIDLGDSGLRYQPGDALGVWYQNDPALVKELVELLWLKGDEPVTVEGKTLPLNEALQWHFELTVNTANIVENYATLTRSETLLPLVGDKAKLQHYAATTPIVDMVRFSPAQLDAEALINLLRPLTPRLYSIASSQAEVENEVHVTVGVVRYDVEGRARAGGASSFLADRVEEEGEVRVFIEHNDNFRLPANPETPVIMIGPGTGIAPFRAFMQQRAADEAPGKNWLFFGNPHFTEDFLYQVEWQRYVKDGVLTRIDLAWSRDQKEKVYVQDKLREQGAELWRWINDGAHIYVCGDANRMAKDVEQALLEVIAEFGGMDTEAADEFLSELRVERRYQRDVY</sequence>
<reference key="1">
    <citation type="journal article" date="2008" name="J. Bacteriol.">
        <title>The pangenome structure of Escherichia coli: comparative genomic analysis of E. coli commensal and pathogenic isolates.</title>
        <authorList>
            <person name="Rasko D.A."/>
            <person name="Rosovitz M.J."/>
            <person name="Myers G.S.A."/>
            <person name="Mongodin E.F."/>
            <person name="Fricke W.F."/>
            <person name="Gajer P."/>
            <person name="Crabtree J."/>
            <person name="Sebaihia M."/>
            <person name="Thomson N.R."/>
            <person name="Chaudhuri R."/>
            <person name="Henderson I.R."/>
            <person name="Sperandio V."/>
            <person name="Ravel J."/>
        </authorList>
    </citation>
    <scope>NUCLEOTIDE SEQUENCE [LARGE SCALE GENOMIC DNA]</scope>
    <source>
        <strain>E24377A / ETEC</strain>
    </source>
</reference>
<protein>
    <recommendedName>
        <fullName evidence="1">Sulfite reductase [NADPH] flavoprotein alpha-component</fullName>
        <shortName evidence="1">SiR-FP</shortName>
        <ecNumber evidence="1">1.8.1.2</ecNumber>
    </recommendedName>
</protein>
<gene>
    <name evidence="1" type="primary">cysJ</name>
    <name type="ordered locus">EcE24377A_3066</name>
</gene>
<name>CYSJ_ECO24</name>